<proteinExistence type="evidence at transcript level"/>
<protein>
    <recommendedName>
        <fullName>Vacuolar protein sorting-associated protein 53 homolog</fullName>
    </recommendedName>
</protein>
<gene>
    <name type="primary">VPS53</name>
    <name type="ORF">RCJMB04_6k3</name>
</gene>
<organism>
    <name type="scientific">Gallus gallus</name>
    <name type="common">Chicken</name>
    <dbReference type="NCBI Taxonomy" id="9031"/>
    <lineage>
        <taxon>Eukaryota</taxon>
        <taxon>Metazoa</taxon>
        <taxon>Chordata</taxon>
        <taxon>Craniata</taxon>
        <taxon>Vertebrata</taxon>
        <taxon>Euteleostomi</taxon>
        <taxon>Archelosauria</taxon>
        <taxon>Archosauria</taxon>
        <taxon>Dinosauria</taxon>
        <taxon>Saurischia</taxon>
        <taxon>Theropoda</taxon>
        <taxon>Coelurosauria</taxon>
        <taxon>Aves</taxon>
        <taxon>Neognathae</taxon>
        <taxon>Galloanserae</taxon>
        <taxon>Galliformes</taxon>
        <taxon>Phasianidae</taxon>
        <taxon>Phasianinae</taxon>
        <taxon>Gallus</taxon>
    </lineage>
</organism>
<sequence>MEEDELELAAGLEAALELAPAVQAAIEQVFPSQDPLDRADFNAVEYINTLFPTEQSLANIDEVVNKIRLKIRKLDDNIRTVVRGQTNVGQDGRQALEEAQKAIQQLFGKIKDIKDKAEKSEQMVKEITRDIKQLDHAKRHLTTSITTLNHLHMLAGGVDSLEAMTRRRQYGEVANLLQGVVNVLEHFNKYMGIPQIRQLSERVKAAQNELGQQILADFEEAFPSQGTKRPGGPSNVLRDACLVANVLDPRIKQEIIKKFIKQHLSEYLVLFQENQDVAWLDKIDRRYAWIKRQLVDYEEKYGRMFPQEWCMTERIAVEFCHVTRTELAKIMRTRAKEIEVKLLLFAIQRTTNFEGLLAKRFSGCTLADGTVKKPEAPPPSTNPFLEDETGTETDEIVIEKSDADKPKKPKVPDNPFHGIVSKCFEPHLYVYIESQDKNLSELIDRFVADFKAQGPPKPNVDEGGAVLPSCADLFVYYKKCMVQCSQLSTGEPMIALTTIFQKYLREYAWKILSGNLPKTTSSSGGLTITSLLKEKEGSEVAKFTLEELCLICSILSTAEYCLATTQQLEEKLKEKVDASLVERINLTGETDTFSIVISNSIQLLVQDLDAACDPALTAMSKMQWQNVEHVGDQSPYVTSVILHIKQNVPIIRDNLASTRKYFTQFCIKFANSFIPKFINHLFKCKPISMVGAEQLLLDTHSLKMVLLDLPSIGSQVVRKAPASYTRIVVKGMTRAEMILKVVMAPHEPPVVFVDNYIKLLADCSTDTFQKILDMKGLKRSEQSSMLELFRQRLPAPPSGVENSGSLSLSAPTPEQESSRIRKLEKLIKKRL</sequence>
<accession>Q5ZLD7</accession>
<reference key="1">
    <citation type="journal article" date="2005" name="Genome Biol.">
        <title>Full-length cDNAs from chicken bursal lymphocytes to facilitate gene function analysis.</title>
        <authorList>
            <person name="Caldwell R.B."/>
            <person name="Kierzek A.M."/>
            <person name="Arakawa H."/>
            <person name="Bezzubov Y."/>
            <person name="Zaim J."/>
            <person name="Fiedler P."/>
            <person name="Kutter S."/>
            <person name="Blagodatski A."/>
            <person name="Kostovska D."/>
            <person name="Koter M."/>
            <person name="Plachy J."/>
            <person name="Carninci P."/>
            <person name="Hayashizaki Y."/>
            <person name="Buerstedde J.-M."/>
        </authorList>
    </citation>
    <scope>NUCLEOTIDE SEQUENCE [LARGE SCALE MRNA]</scope>
    <source>
        <strain>CB</strain>
        <tissue>Bursa of Fabricius</tissue>
    </source>
</reference>
<keyword id="KW-0175">Coiled coil</keyword>
<keyword id="KW-0967">Endosome</keyword>
<keyword id="KW-0333">Golgi apparatus</keyword>
<keyword id="KW-0472">Membrane</keyword>
<keyword id="KW-0653">Protein transport</keyword>
<keyword id="KW-1185">Reference proteome</keyword>
<keyword id="KW-0813">Transport</keyword>
<evidence type="ECO:0000250" key="1">
    <source>
        <dbReference type="UniProtKB" id="Q5VIR6"/>
    </source>
</evidence>
<evidence type="ECO:0000255" key="2"/>
<evidence type="ECO:0000256" key="3">
    <source>
        <dbReference type="SAM" id="MobiDB-lite"/>
    </source>
</evidence>
<evidence type="ECO:0000305" key="4"/>
<dbReference type="EMBL" id="AJ719797">
    <property type="protein sequence ID" value="CAG31456.1"/>
    <property type="molecule type" value="mRNA"/>
</dbReference>
<dbReference type="RefSeq" id="NP_001012824.1">
    <property type="nucleotide sequence ID" value="NM_001012806.2"/>
</dbReference>
<dbReference type="SMR" id="Q5ZLD7"/>
<dbReference type="FunCoup" id="Q5ZLD7">
    <property type="interactions" value="1727"/>
</dbReference>
<dbReference type="STRING" id="9031.ENSGALP00000045679"/>
<dbReference type="GlyGen" id="Q5ZLD7">
    <property type="glycosylation" value="1 site"/>
</dbReference>
<dbReference type="PaxDb" id="9031-ENSGALP00000007788"/>
<dbReference type="GeneID" id="417622"/>
<dbReference type="KEGG" id="gga:417622"/>
<dbReference type="CTD" id="55275"/>
<dbReference type="VEuPathDB" id="HostDB:geneid_417622"/>
<dbReference type="eggNOG" id="KOG2180">
    <property type="taxonomic scope" value="Eukaryota"/>
</dbReference>
<dbReference type="InParanoid" id="Q5ZLD7"/>
<dbReference type="OMA" id="YKFAEAK"/>
<dbReference type="OrthoDB" id="10261632at2759"/>
<dbReference type="PhylomeDB" id="Q5ZLD7"/>
<dbReference type="Reactome" id="R-GGA-6811440">
    <property type="pathway name" value="Retrograde transport at the Trans-Golgi-Network"/>
</dbReference>
<dbReference type="PRO" id="PR:Q5ZLD7"/>
<dbReference type="Proteomes" id="UP000000539">
    <property type="component" value="Chromosome 19"/>
</dbReference>
<dbReference type="Bgee" id="ENSGALG00000042071">
    <property type="expression patterns" value="Expressed in ovary and 13 other cell types or tissues"/>
</dbReference>
<dbReference type="GO" id="GO:0005829">
    <property type="term" value="C:cytosol"/>
    <property type="evidence" value="ECO:0007669"/>
    <property type="project" value="GOC"/>
</dbReference>
<dbReference type="GO" id="GO:1990745">
    <property type="term" value="C:EARP complex"/>
    <property type="evidence" value="ECO:0000250"/>
    <property type="project" value="UniProtKB"/>
</dbReference>
<dbReference type="GO" id="GO:0010008">
    <property type="term" value="C:endosome membrane"/>
    <property type="evidence" value="ECO:0007669"/>
    <property type="project" value="UniProtKB-SubCell"/>
</dbReference>
<dbReference type="GO" id="GO:0000938">
    <property type="term" value="C:GARP complex"/>
    <property type="evidence" value="ECO:0000318"/>
    <property type="project" value="GO_Central"/>
</dbReference>
<dbReference type="GO" id="GO:0055037">
    <property type="term" value="C:recycling endosome"/>
    <property type="evidence" value="ECO:0000250"/>
    <property type="project" value="UniProtKB"/>
</dbReference>
<dbReference type="GO" id="GO:0032456">
    <property type="term" value="P:endocytic recycling"/>
    <property type="evidence" value="ECO:0000250"/>
    <property type="project" value="UniProtKB"/>
</dbReference>
<dbReference type="GO" id="GO:0015031">
    <property type="term" value="P:protein transport"/>
    <property type="evidence" value="ECO:0007669"/>
    <property type="project" value="UniProtKB-KW"/>
</dbReference>
<dbReference type="GO" id="GO:0042147">
    <property type="term" value="P:retrograde transport, endosome to Golgi"/>
    <property type="evidence" value="ECO:0000250"/>
    <property type="project" value="UniProtKB"/>
</dbReference>
<dbReference type="FunFam" id="1.10.357.110:FF:000001">
    <property type="entry name" value="vacuolar protein sorting-associated protein 53 homolog"/>
    <property type="match status" value="1"/>
</dbReference>
<dbReference type="Gene3D" id="1.10.287.950">
    <property type="entry name" value="Methyl-accepting chemotaxis protein"/>
    <property type="match status" value="1"/>
</dbReference>
<dbReference type="Gene3D" id="1.10.357.110">
    <property type="entry name" value="Vacuolar protein sorting-associated protein 53, C-terminus"/>
    <property type="match status" value="1"/>
</dbReference>
<dbReference type="InterPro" id="IPR039766">
    <property type="entry name" value="Vps53"/>
</dbReference>
<dbReference type="InterPro" id="IPR031745">
    <property type="entry name" value="Vps53_C"/>
</dbReference>
<dbReference type="InterPro" id="IPR038260">
    <property type="entry name" value="Vps53_C_sf"/>
</dbReference>
<dbReference type="InterPro" id="IPR007234">
    <property type="entry name" value="Vps53_N"/>
</dbReference>
<dbReference type="PANTHER" id="PTHR12820:SF0">
    <property type="entry name" value="VACUOLAR PROTEIN SORTING-ASSOCIATED PROTEIN 53 HOMOLOG"/>
    <property type="match status" value="1"/>
</dbReference>
<dbReference type="PANTHER" id="PTHR12820">
    <property type="entry name" value="VACUOLAR SORTING PROTEIN 53"/>
    <property type="match status" value="1"/>
</dbReference>
<dbReference type="Pfam" id="PF16854">
    <property type="entry name" value="VPS53_C"/>
    <property type="match status" value="1"/>
</dbReference>
<dbReference type="Pfam" id="PF04100">
    <property type="entry name" value="Vps53_N"/>
    <property type="match status" value="1"/>
</dbReference>
<name>VPS53_CHICK</name>
<feature type="chain" id="PRO_0000215192" description="Vacuolar protein sorting-associated protein 53 homolog">
    <location>
        <begin position="1"/>
        <end position="831"/>
    </location>
</feature>
<feature type="region of interest" description="Disordered" evidence="3">
    <location>
        <begin position="370"/>
        <end position="391"/>
    </location>
</feature>
<feature type="region of interest" description="Disordered" evidence="3">
    <location>
        <begin position="794"/>
        <end position="819"/>
    </location>
</feature>
<feature type="coiled-coil region" evidence="2">
    <location>
        <begin position="54"/>
        <end position="141"/>
    </location>
</feature>
<feature type="compositionally biased region" description="Polar residues" evidence="3">
    <location>
        <begin position="800"/>
        <end position="815"/>
    </location>
</feature>
<comment type="function">
    <text evidence="1">Acts as a component of the GARP complex that is involved in retrograde transport from early and late endosomes to the trans-Golgi network (TGN). Acts as a component of the EARP complex that is involved in endocytic recycling.</text>
</comment>
<comment type="subunit">
    <text evidence="1">Component of the Golgi-associated retrograde protein (GARP) complex. Component of the endosome-associated retrograde protein (EARP) complex.</text>
</comment>
<comment type="subcellular location">
    <subcellularLocation>
        <location evidence="1">Golgi apparatus</location>
        <location evidence="1">trans-Golgi network membrane</location>
        <topology evidence="1">Peripheral membrane protein</topology>
    </subcellularLocation>
    <subcellularLocation>
        <location evidence="1">Endosome membrane</location>
        <topology evidence="1">Peripheral membrane protein</topology>
    </subcellularLocation>
    <subcellularLocation>
        <location evidence="1">Recycling endosome</location>
    </subcellularLocation>
    <text evidence="1">Localizes to the trans-Golgi network as part of the GARP complex, while it localizes to recycling endosomes as part of the EARP complex.</text>
</comment>
<comment type="similarity">
    <text evidence="4">Belongs to the VPS53 family.</text>
</comment>